<accession>Q7RKK8</accession>
<reference key="1">
    <citation type="journal article" date="2002" name="Nature">
        <title>Genome sequence and comparative analysis of the model rodent malaria parasite Plasmodium yoelii yoelii.</title>
        <authorList>
            <person name="Carlton J.M."/>
            <person name="Angiuoli S.V."/>
            <person name="Suh B.B."/>
            <person name="Kooij T.W."/>
            <person name="Pertea M."/>
            <person name="Silva J.C."/>
            <person name="Ermolaeva M.D."/>
            <person name="Allen J.E."/>
            <person name="Selengut J.D."/>
            <person name="Koo H.L."/>
            <person name="Peterson J.D."/>
            <person name="Pop M."/>
            <person name="Kosack D.S."/>
            <person name="Shumway M.F."/>
            <person name="Bidwell S.L."/>
            <person name="Shallom S.J."/>
            <person name="van Aken S.E."/>
            <person name="Riedmuller S.B."/>
            <person name="Feldblyum T.V."/>
            <person name="Cho J.K."/>
            <person name="Quackenbush J."/>
            <person name="Sedegah M."/>
            <person name="Shoaibi A."/>
            <person name="Cummings L.M."/>
            <person name="Florens L."/>
            <person name="Yates J.R. III"/>
            <person name="Raine J.D."/>
            <person name="Sinden R.E."/>
            <person name="Harris M.A."/>
            <person name="Cunningham D.A."/>
            <person name="Preiser P.R."/>
            <person name="Bergman L.W."/>
            <person name="Vaidya A.B."/>
            <person name="van Lin L.H."/>
            <person name="Janse C.J."/>
            <person name="Waters A.P."/>
            <person name="Smith H.O."/>
            <person name="White O.R."/>
            <person name="Salzberg S.L."/>
            <person name="Venter J.C."/>
            <person name="Fraser C.M."/>
            <person name="Hoffman S.L."/>
            <person name="Gardner M.J."/>
            <person name="Carucci D.J."/>
        </authorList>
    </citation>
    <scope>NUCLEOTIDE SEQUENCE [LARGE SCALE GENOMIC DNA]</scope>
    <source>
        <strain>17XNL</strain>
    </source>
</reference>
<evidence type="ECO:0000250" key="1"/>
<evidence type="ECO:0000305" key="2"/>
<sequence>MYDSSSKIKDLSLAPFGKLQMEISETEMPGIMTIREEYEKLKPFKGAKITGCLHMTIETALLIETLQKLGARIRWCSCNIFSTLDYAAAAVSTLENVSVFAWRGETLEEYWWCVEKALTWGENGEGPDLIVDDGADASYLVHKGAEYEKLYEEKKILPDPESGKNEEERCFLSLIKSSILKNPKKWTNMAKKIIGMSEETTTGVLRVKKIEKNNGLLFTAINVNDSVTKQKYDNIYGCRHSLPDGLMRATDFLISGKIVVICGYGDVGKGCASAMKGLGARVYVTEIDPICAIQAVMEGFNVVTLEEIVEKGDFFITCTGNVDIIKLEHLLKMKNNAVVGNIGHFDDEIQVSDLFNHEGIEIENVKPQVDRVTLPNGNKIIVLAQGRLLNLSCATGHPAFVMSFSFCNQIFAQLELWENRNTGKYEKNKSYILPKELDEKVAFYHLKKLNATLTELDDNQCEFLGVSKTGPFKSEAYRY</sequence>
<comment type="function">
    <text evidence="1">Adenosylhomocysteine is a competitive inhibitor of S-adenosyl-L-methionine-dependent methyl transferase reactions; therefore adenosylhomocysteinase may play a key role in the control of methylations via regulation of the intracellular concentration of adenosylhomocysteine.</text>
</comment>
<comment type="catalytic activity">
    <reaction>
        <text>S-adenosyl-L-homocysteine + H2O = L-homocysteine + adenosine</text>
        <dbReference type="Rhea" id="RHEA:21708"/>
        <dbReference type="ChEBI" id="CHEBI:15377"/>
        <dbReference type="ChEBI" id="CHEBI:16335"/>
        <dbReference type="ChEBI" id="CHEBI:57856"/>
        <dbReference type="ChEBI" id="CHEBI:58199"/>
        <dbReference type="EC" id="3.13.2.1"/>
    </reaction>
</comment>
<comment type="cofactor">
    <cofactor evidence="1">
        <name>NAD(+)</name>
        <dbReference type="ChEBI" id="CHEBI:57540"/>
    </cofactor>
    <text evidence="1">Binds 1 NAD(+) per subunit.</text>
</comment>
<comment type="pathway">
    <text>Amino-acid biosynthesis; L-homocysteine biosynthesis; L-homocysteine from S-adenosyl-L-homocysteine: step 1/1.</text>
</comment>
<comment type="subunit">
    <text evidence="1">Homotetramer.</text>
</comment>
<comment type="similarity">
    <text evidence="2">Belongs to the adenosylhomocysteinase family.</text>
</comment>
<organism>
    <name type="scientific">Plasmodium yoelii yoelii</name>
    <dbReference type="NCBI Taxonomy" id="73239"/>
    <lineage>
        <taxon>Eukaryota</taxon>
        <taxon>Sar</taxon>
        <taxon>Alveolata</taxon>
        <taxon>Apicomplexa</taxon>
        <taxon>Aconoidasida</taxon>
        <taxon>Haemosporida</taxon>
        <taxon>Plasmodiidae</taxon>
        <taxon>Plasmodium</taxon>
        <taxon>Plasmodium (Vinckeia)</taxon>
    </lineage>
</organism>
<gene>
    <name type="ORF">PY02893</name>
</gene>
<feature type="chain" id="PRO_0000116918" description="Adenosylhomocysteinase">
    <location>
        <begin position="1"/>
        <end position="479"/>
    </location>
</feature>
<feature type="binding site" evidence="1">
    <location>
        <position position="56"/>
    </location>
    <ligand>
        <name>substrate</name>
    </ligand>
</feature>
<feature type="binding site" evidence="1">
    <location>
        <position position="133"/>
    </location>
    <ligand>
        <name>substrate</name>
    </ligand>
</feature>
<feature type="binding site" evidence="1">
    <location>
        <position position="199"/>
    </location>
    <ligand>
        <name>substrate</name>
    </ligand>
</feature>
<feature type="binding site" evidence="1">
    <location>
        <begin position="200"/>
        <end position="202"/>
    </location>
    <ligand>
        <name>NAD(+)</name>
        <dbReference type="ChEBI" id="CHEBI:57540"/>
    </ligand>
</feature>
<feature type="binding site" evidence="1">
    <location>
        <position position="229"/>
    </location>
    <ligand>
        <name>substrate</name>
    </ligand>
</feature>
<feature type="binding site" evidence="1">
    <location>
        <position position="233"/>
    </location>
    <ligand>
        <name>substrate</name>
    </ligand>
</feature>
<feature type="binding site" evidence="1">
    <location>
        <position position="234"/>
    </location>
    <ligand>
        <name>NAD(+)</name>
        <dbReference type="ChEBI" id="CHEBI:57540"/>
    </ligand>
</feature>
<feature type="binding site" evidence="1">
    <location>
        <begin position="263"/>
        <end position="268"/>
    </location>
    <ligand>
        <name>NAD(+)</name>
        <dbReference type="ChEBI" id="CHEBI:57540"/>
    </ligand>
</feature>
<feature type="binding site" evidence="1">
    <location>
        <position position="286"/>
    </location>
    <ligand>
        <name>NAD(+)</name>
        <dbReference type="ChEBI" id="CHEBI:57540"/>
    </ligand>
</feature>
<feature type="binding site" evidence="1">
    <location>
        <position position="321"/>
    </location>
    <ligand>
        <name>NAD(+)</name>
        <dbReference type="ChEBI" id="CHEBI:57540"/>
    </ligand>
</feature>
<feature type="binding site" evidence="1">
    <location>
        <begin position="342"/>
        <end position="344"/>
    </location>
    <ligand>
        <name>NAD(+)</name>
        <dbReference type="ChEBI" id="CHEBI:57540"/>
    </ligand>
</feature>
<feature type="binding site" evidence="1">
    <location>
        <position position="390"/>
    </location>
    <ligand>
        <name>NAD(+)</name>
        <dbReference type="ChEBI" id="CHEBI:57540"/>
    </ligand>
</feature>
<proteinExistence type="inferred from homology"/>
<protein>
    <recommendedName>
        <fullName>Adenosylhomocysteinase</fullName>
        <shortName>AdoHcyase</shortName>
        <ecNumber>3.13.2.1</ecNumber>
    </recommendedName>
    <alternativeName>
        <fullName>S-adenosyl-L-homocysteine hydrolase</fullName>
    </alternativeName>
</protein>
<name>SAHH_PLAYO</name>
<keyword id="KW-0378">Hydrolase</keyword>
<keyword id="KW-0520">NAD</keyword>
<keyword id="KW-0554">One-carbon metabolism</keyword>
<keyword id="KW-1185">Reference proteome</keyword>
<dbReference type="EC" id="3.13.2.1"/>
<dbReference type="EMBL" id="AABL01000811">
    <property type="protein sequence ID" value="EAA22407.1"/>
    <property type="molecule type" value="Genomic_DNA"/>
</dbReference>
<dbReference type="SMR" id="Q7RKK8"/>
<dbReference type="FunCoup" id="Q7RKK8">
    <property type="interactions" value="221"/>
</dbReference>
<dbReference type="STRING" id="73239.Q7RKK8"/>
<dbReference type="PaxDb" id="73239-Q7RKK8"/>
<dbReference type="EnsemblProtists" id="EAA22407">
    <property type="protein sequence ID" value="EAA22407"/>
    <property type="gene ID" value="EAA22407"/>
</dbReference>
<dbReference type="KEGG" id="pyo:PY17X_1239000"/>
<dbReference type="VEuPathDB" id="PlasmoDB:Py17XNL_001205244"/>
<dbReference type="InParanoid" id="Q7RKK8"/>
<dbReference type="UniPathway" id="UPA00314">
    <property type="reaction ID" value="UER00076"/>
</dbReference>
<dbReference type="Proteomes" id="UP000008553">
    <property type="component" value="Unassembled WGS sequence"/>
</dbReference>
<dbReference type="GO" id="GO:0005829">
    <property type="term" value="C:cytosol"/>
    <property type="evidence" value="ECO:0007669"/>
    <property type="project" value="TreeGrafter"/>
</dbReference>
<dbReference type="GO" id="GO:0004013">
    <property type="term" value="F:adenosylhomocysteinase activity"/>
    <property type="evidence" value="ECO:0007669"/>
    <property type="project" value="RHEA"/>
</dbReference>
<dbReference type="GO" id="GO:0006730">
    <property type="term" value="P:one-carbon metabolic process"/>
    <property type="evidence" value="ECO:0007669"/>
    <property type="project" value="UniProtKB-KW"/>
</dbReference>
<dbReference type="GO" id="GO:0033353">
    <property type="term" value="P:S-adenosylmethionine cycle"/>
    <property type="evidence" value="ECO:0007669"/>
    <property type="project" value="TreeGrafter"/>
</dbReference>
<dbReference type="CDD" id="cd00401">
    <property type="entry name" value="SAHH"/>
    <property type="match status" value="1"/>
</dbReference>
<dbReference type="FunFam" id="3.40.50.1480:FF:000011">
    <property type="entry name" value="Adenosylhomocysteinase"/>
    <property type="match status" value="1"/>
</dbReference>
<dbReference type="FunFam" id="3.40.50.720:FF:000004">
    <property type="entry name" value="Adenosylhomocysteinase"/>
    <property type="match status" value="1"/>
</dbReference>
<dbReference type="Gene3D" id="3.40.50.1480">
    <property type="entry name" value="Adenosylhomocysteinase-like"/>
    <property type="match status" value="1"/>
</dbReference>
<dbReference type="Gene3D" id="3.40.50.720">
    <property type="entry name" value="NAD(P)-binding Rossmann-like Domain"/>
    <property type="match status" value="1"/>
</dbReference>
<dbReference type="HAMAP" id="MF_00563">
    <property type="entry name" value="AdoHcyase"/>
    <property type="match status" value="1"/>
</dbReference>
<dbReference type="InterPro" id="IPR042172">
    <property type="entry name" value="Adenosylhomocyst_ase-like_sf"/>
</dbReference>
<dbReference type="InterPro" id="IPR000043">
    <property type="entry name" value="Adenosylhomocysteinase-like"/>
</dbReference>
<dbReference type="InterPro" id="IPR015878">
    <property type="entry name" value="Ado_hCys_hydrolase_NAD-bd"/>
</dbReference>
<dbReference type="InterPro" id="IPR036291">
    <property type="entry name" value="NAD(P)-bd_dom_sf"/>
</dbReference>
<dbReference type="InterPro" id="IPR020082">
    <property type="entry name" value="S-Ado-L-homoCys_hydrolase_CS"/>
</dbReference>
<dbReference type="NCBIfam" id="TIGR00936">
    <property type="entry name" value="ahcY"/>
    <property type="match status" value="1"/>
</dbReference>
<dbReference type="NCBIfam" id="NF004005">
    <property type="entry name" value="PRK05476.2-3"/>
    <property type="match status" value="1"/>
</dbReference>
<dbReference type="PANTHER" id="PTHR23420">
    <property type="entry name" value="ADENOSYLHOMOCYSTEINASE"/>
    <property type="match status" value="1"/>
</dbReference>
<dbReference type="PANTHER" id="PTHR23420:SF0">
    <property type="entry name" value="ADENOSYLHOMOCYSTEINASE"/>
    <property type="match status" value="1"/>
</dbReference>
<dbReference type="Pfam" id="PF05221">
    <property type="entry name" value="AdoHcyase"/>
    <property type="match status" value="1"/>
</dbReference>
<dbReference type="Pfam" id="PF00670">
    <property type="entry name" value="AdoHcyase_NAD"/>
    <property type="match status" value="1"/>
</dbReference>
<dbReference type="PIRSF" id="PIRSF001109">
    <property type="entry name" value="Ad_hcy_hydrolase"/>
    <property type="match status" value="1"/>
</dbReference>
<dbReference type="SMART" id="SM00996">
    <property type="entry name" value="AdoHcyase"/>
    <property type="match status" value="1"/>
</dbReference>
<dbReference type="SMART" id="SM00997">
    <property type="entry name" value="AdoHcyase_NAD"/>
    <property type="match status" value="1"/>
</dbReference>
<dbReference type="SUPFAM" id="SSF52283">
    <property type="entry name" value="Formate/glycerate dehydrogenase catalytic domain-like"/>
    <property type="match status" value="2"/>
</dbReference>
<dbReference type="SUPFAM" id="SSF51735">
    <property type="entry name" value="NAD(P)-binding Rossmann-fold domains"/>
    <property type="match status" value="1"/>
</dbReference>
<dbReference type="PROSITE" id="PS00738">
    <property type="entry name" value="ADOHCYASE_1"/>
    <property type="match status" value="1"/>
</dbReference>
<dbReference type="PROSITE" id="PS00739">
    <property type="entry name" value="ADOHCYASE_2"/>
    <property type="match status" value="1"/>
</dbReference>